<evidence type="ECO:0000255" key="1">
    <source>
        <dbReference type="HAMAP-Rule" id="MF_00139"/>
    </source>
</evidence>
<evidence type="ECO:0000255" key="2">
    <source>
        <dbReference type="PROSITE-ProRule" id="PRU01202"/>
    </source>
</evidence>
<feature type="chain" id="PRO_1000018985" description="Bifunctional purine biosynthesis protein PurH">
    <location>
        <begin position="1"/>
        <end position="530"/>
    </location>
</feature>
<feature type="domain" description="MGS-like" evidence="2">
    <location>
        <begin position="1"/>
        <end position="148"/>
    </location>
</feature>
<reference key="1">
    <citation type="submission" date="2007-08" db="EMBL/GenBank/DDBJ databases">
        <authorList>
            <consortium name="The Vibrio harveyi Genome Sequencing Project"/>
            <person name="Bassler B."/>
            <person name="Clifton S.W."/>
            <person name="Fulton L."/>
            <person name="Delehaunty K."/>
            <person name="Fronick C."/>
            <person name="Harrison M."/>
            <person name="Markivic C."/>
            <person name="Fulton R."/>
            <person name="Tin-Wollam A.-M."/>
            <person name="Shah N."/>
            <person name="Pepin K."/>
            <person name="Nash W."/>
            <person name="Thiruvilangam P."/>
            <person name="Bhonagiri V."/>
            <person name="Waters C."/>
            <person name="Tu K.C."/>
            <person name="Irgon J."/>
            <person name="Wilson R.K."/>
        </authorList>
    </citation>
    <scope>NUCLEOTIDE SEQUENCE [LARGE SCALE GENOMIC DNA]</scope>
    <source>
        <strain>ATCC BAA-1116 / BB120</strain>
    </source>
</reference>
<gene>
    <name evidence="1" type="primary">purH</name>
    <name type="ordered locus">VIBHAR_00210</name>
</gene>
<name>PUR9_VIBC1</name>
<organism>
    <name type="scientific">Vibrio campbellii (strain ATCC BAA-1116)</name>
    <dbReference type="NCBI Taxonomy" id="2902295"/>
    <lineage>
        <taxon>Bacteria</taxon>
        <taxon>Pseudomonadati</taxon>
        <taxon>Pseudomonadota</taxon>
        <taxon>Gammaproteobacteria</taxon>
        <taxon>Vibrionales</taxon>
        <taxon>Vibrionaceae</taxon>
        <taxon>Vibrio</taxon>
    </lineage>
</organism>
<accession>A7MXG0</accession>
<proteinExistence type="inferred from homology"/>
<comment type="catalytic activity">
    <reaction evidence="1">
        <text>(6R)-10-formyltetrahydrofolate + 5-amino-1-(5-phospho-beta-D-ribosyl)imidazole-4-carboxamide = 5-formamido-1-(5-phospho-D-ribosyl)imidazole-4-carboxamide + (6S)-5,6,7,8-tetrahydrofolate</text>
        <dbReference type="Rhea" id="RHEA:22192"/>
        <dbReference type="ChEBI" id="CHEBI:57453"/>
        <dbReference type="ChEBI" id="CHEBI:58467"/>
        <dbReference type="ChEBI" id="CHEBI:58475"/>
        <dbReference type="ChEBI" id="CHEBI:195366"/>
        <dbReference type="EC" id="2.1.2.3"/>
    </reaction>
</comment>
<comment type="catalytic activity">
    <reaction evidence="1">
        <text>IMP + H2O = 5-formamido-1-(5-phospho-D-ribosyl)imidazole-4-carboxamide</text>
        <dbReference type="Rhea" id="RHEA:18445"/>
        <dbReference type="ChEBI" id="CHEBI:15377"/>
        <dbReference type="ChEBI" id="CHEBI:58053"/>
        <dbReference type="ChEBI" id="CHEBI:58467"/>
        <dbReference type="EC" id="3.5.4.10"/>
    </reaction>
</comment>
<comment type="pathway">
    <text evidence="1">Purine metabolism; IMP biosynthesis via de novo pathway; 5-formamido-1-(5-phospho-D-ribosyl)imidazole-4-carboxamide from 5-amino-1-(5-phospho-D-ribosyl)imidazole-4-carboxamide (10-formyl THF route): step 1/1.</text>
</comment>
<comment type="pathway">
    <text evidence="1">Purine metabolism; IMP biosynthesis via de novo pathway; IMP from 5-formamido-1-(5-phospho-D-ribosyl)imidazole-4-carboxamide: step 1/1.</text>
</comment>
<comment type="domain">
    <text evidence="1">The IMP cyclohydrolase activity resides in the N-terminal region.</text>
</comment>
<comment type="similarity">
    <text evidence="1">Belongs to the PurH family.</text>
</comment>
<dbReference type="EC" id="2.1.2.3" evidence="1"/>
<dbReference type="EC" id="3.5.4.10" evidence="1"/>
<dbReference type="EMBL" id="CP000789">
    <property type="protein sequence ID" value="ABU69250.1"/>
    <property type="molecule type" value="Genomic_DNA"/>
</dbReference>
<dbReference type="RefSeq" id="WP_012126535.1">
    <property type="nucleotide sequence ID" value="NC_009783.1"/>
</dbReference>
<dbReference type="SMR" id="A7MXG0"/>
<dbReference type="KEGG" id="vha:VIBHAR_00210"/>
<dbReference type="PATRIC" id="fig|338187.25.peg.2340"/>
<dbReference type="UniPathway" id="UPA00074">
    <property type="reaction ID" value="UER00133"/>
</dbReference>
<dbReference type="UniPathway" id="UPA00074">
    <property type="reaction ID" value="UER00135"/>
</dbReference>
<dbReference type="Proteomes" id="UP000008152">
    <property type="component" value="Chromosome I"/>
</dbReference>
<dbReference type="GO" id="GO:0005829">
    <property type="term" value="C:cytosol"/>
    <property type="evidence" value="ECO:0007669"/>
    <property type="project" value="TreeGrafter"/>
</dbReference>
<dbReference type="GO" id="GO:0003937">
    <property type="term" value="F:IMP cyclohydrolase activity"/>
    <property type="evidence" value="ECO:0007669"/>
    <property type="project" value="UniProtKB-UniRule"/>
</dbReference>
<dbReference type="GO" id="GO:0004643">
    <property type="term" value="F:phosphoribosylaminoimidazolecarboxamide formyltransferase activity"/>
    <property type="evidence" value="ECO:0007669"/>
    <property type="project" value="UniProtKB-UniRule"/>
</dbReference>
<dbReference type="GO" id="GO:0006189">
    <property type="term" value="P:'de novo' IMP biosynthetic process"/>
    <property type="evidence" value="ECO:0007669"/>
    <property type="project" value="UniProtKB-UniRule"/>
</dbReference>
<dbReference type="CDD" id="cd01421">
    <property type="entry name" value="IMPCH"/>
    <property type="match status" value="1"/>
</dbReference>
<dbReference type="FunFam" id="3.40.140.20:FF:000001">
    <property type="entry name" value="Bifunctional purine biosynthesis protein PurH"/>
    <property type="match status" value="1"/>
</dbReference>
<dbReference type="FunFam" id="3.40.140.20:FF:000002">
    <property type="entry name" value="Bifunctional purine biosynthesis protein PurH"/>
    <property type="match status" value="1"/>
</dbReference>
<dbReference type="FunFam" id="3.40.50.1380:FF:000001">
    <property type="entry name" value="Bifunctional purine biosynthesis protein PurH"/>
    <property type="match status" value="1"/>
</dbReference>
<dbReference type="Gene3D" id="3.40.140.20">
    <property type="match status" value="2"/>
</dbReference>
<dbReference type="Gene3D" id="3.40.50.1380">
    <property type="entry name" value="Methylglyoxal synthase-like domain"/>
    <property type="match status" value="1"/>
</dbReference>
<dbReference type="HAMAP" id="MF_00139">
    <property type="entry name" value="PurH"/>
    <property type="match status" value="1"/>
</dbReference>
<dbReference type="InterPro" id="IPR024051">
    <property type="entry name" value="AICAR_Tfase_dup_dom_sf"/>
</dbReference>
<dbReference type="InterPro" id="IPR016193">
    <property type="entry name" value="Cytidine_deaminase-like"/>
</dbReference>
<dbReference type="InterPro" id="IPR011607">
    <property type="entry name" value="MGS-like_dom"/>
</dbReference>
<dbReference type="InterPro" id="IPR036914">
    <property type="entry name" value="MGS-like_dom_sf"/>
</dbReference>
<dbReference type="InterPro" id="IPR002695">
    <property type="entry name" value="PurH-like"/>
</dbReference>
<dbReference type="NCBIfam" id="NF002049">
    <property type="entry name" value="PRK00881.1"/>
    <property type="match status" value="1"/>
</dbReference>
<dbReference type="NCBIfam" id="TIGR00355">
    <property type="entry name" value="purH"/>
    <property type="match status" value="1"/>
</dbReference>
<dbReference type="PANTHER" id="PTHR11692:SF0">
    <property type="entry name" value="BIFUNCTIONAL PURINE BIOSYNTHESIS PROTEIN ATIC"/>
    <property type="match status" value="1"/>
</dbReference>
<dbReference type="PANTHER" id="PTHR11692">
    <property type="entry name" value="BIFUNCTIONAL PURINE BIOSYNTHESIS PROTEIN PURH"/>
    <property type="match status" value="1"/>
</dbReference>
<dbReference type="Pfam" id="PF01808">
    <property type="entry name" value="AICARFT_IMPCHas"/>
    <property type="match status" value="1"/>
</dbReference>
<dbReference type="Pfam" id="PF02142">
    <property type="entry name" value="MGS"/>
    <property type="match status" value="1"/>
</dbReference>
<dbReference type="PIRSF" id="PIRSF000414">
    <property type="entry name" value="AICARFT_IMPCHas"/>
    <property type="match status" value="1"/>
</dbReference>
<dbReference type="SMART" id="SM00798">
    <property type="entry name" value="AICARFT_IMPCHas"/>
    <property type="match status" value="1"/>
</dbReference>
<dbReference type="SMART" id="SM00851">
    <property type="entry name" value="MGS"/>
    <property type="match status" value="1"/>
</dbReference>
<dbReference type="SUPFAM" id="SSF53927">
    <property type="entry name" value="Cytidine deaminase-like"/>
    <property type="match status" value="1"/>
</dbReference>
<dbReference type="SUPFAM" id="SSF52335">
    <property type="entry name" value="Methylglyoxal synthase-like"/>
    <property type="match status" value="1"/>
</dbReference>
<dbReference type="PROSITE" id="PS51855">
    <property type="entry name" value="MGS"/>
    <property type="match status" value="1"/>
</dbReference>
<sequence>MNNARPIRRALISVSDKTGIVEFAQALAERGVDILSTGGTARLLAEQGIAVTEVSDYTGFPEMMDGRVKTLHPKVHGGVLGRRGQDDDVMEKHGINPIDMVVVNLYPFAETVAKEGCTLADAVENIDIGGPTMVRSAAKNHKDVTIVVNAHDYNRVIAEMDANDKSLTLETRFDLAIAAFEHTASYDGMIANYFGTMVPSYGENKEGDEESKFPRTFNQQFEKKQDMRYGENSHQAAAFYVEANPQEASVSTARQIQGKALSYNNIADTDAALECVKEFNEPACVIVKHANPCGVALGKDILEAYNRAYQTDPTSAFGGIIAFNQELDAETATAIVERQFIEVIIAPSVSAEAIEVVAAKKNVRLLECGEWTTKTTGFDVKRVNGGLLVQDRDQGMVSLGDLKVVSKRQPTEEELKDALFCWKVAKYVKSNAIVYAKGDMTIGVGAGQMSRVYSAKIAGIKAADEGLEVAGSVMASDAFFPFRDGIDAAAEAGIKCVIQPGGSMRDDEVIAAADEHGMAMIFTGMRHFRH</sequence>
<keyword id="KW-0378">Hydrolase</keyword>
<keyword id="KW-0511">Multifunctional enzyme</keyword>
<keyword id="KW-0658">Purine biosynthesis</keyword>
<keyword id="KW-0808">Transferase</keyword>
<protein>
    <recommendedName>
        <fullName evidence="1">Bifunctional purine biosynthesis protein PurH</fullName>
    </recommendedName>
    <domain>
        <recommendedName>
            <fullName evidence="1">Phosphoribosylaminoimidazolecarboxamide formyltransferase</fullName>
            <ecNumber evidence="1">2.1.2.3</ecNumber>
        </recommendedName>
        <alternativeName>
            <fullName evidence="1">AICAR transformylase</fullName>
        </alternativeName>
    </domain>
    <domain>
        <recommendedName>
            <fullName evidence="1">IMP cyclohydrolase</fullName>
            <ecNumber evidence="1">3.5.4.10</ecNumber>
        </recommendedName>
        <alternativeName>
            <fullName evidence="1">ATIC</fullName>
        </alternativeName>
        <alternativeName>
            <fullName evidence="1">IMP synthase</fullName>
        </alternativeName>
        <alternativeName>
            <fullName evidence="1">Inosinicase</fullName>
        </alternativeName>
    </domain>
</protein>